<keyword id="KW-0002">3D-structure</keyword>
<keyword id="KW-0030">Aminoacyl-tRNA synthetase</keyword>
<keyword id="KW-0067">ATP-binding</keyword>
<keyword id="KW-0963">Cytoplasm</keyword>
<keyword id="KW-0436">Ligase</keyword>
<keyword id="KW-0547">Nucleotide-binding</keyword>
<keyword id="KW-0648">Protein biosynthesis</keyword>
<dbReference type="EC" id="6.1.1.19" evidence="1"/>
<dbReference type="EMBL" id="CP000647">
    <property type="protein sequence ID" value="ABR77814.1"/>
    <property type="molecule type" value="Genomic_DNA"/>
</dbReference>
<dbReference type="RefSeq" id="WP_004151452.1">
    <property type="nucleotide sequence ID" value="NC_009648.1"/>
</dbReference>
<dbReference type="PDB" id="3GDZ">
    <property type="method" value="X-ray"/>
    <property type="resolution" value="2.20 A"/>
    <property type="chains" value="A/B/C/D=1-106"/>
</dbReference>
<dbReference type="PDBsum" id="3GDZ"/>
<dbReference type="SMR" id="A6TB43"/>
<dbReference type="STRING" id="272620.KPN_02388"/>
<dbReference type="jPOST" id="A6TB43"/>
<dbReference type="PaxDb" id="272620-KPN_02388"/>
<dbReference type="DNASU" id="5342538"/>
<dbReference type="EnsemblBacteria" id="ABR77814">
    <property type="protein sequence ID" value="ABR77814"/>
    <property type="gene ID" value="KPN_02388"/>
</dbReference>
<dbReference type="KEGG" id="kpn:KPN_02388"/>
<dbReference type="HOGENOM" id="CLU_006406_5_1_6"/>
<dbReference type="EvolutionaryTrace" id="A6TB43"/>
<dbReference type="Proteomes" id="UP000000265">
    <property type="component" value="Chromosome"/>
</dbReference>
<dbReference type="GO" id="GO:0005737">
    <property type="term" value="C:cytoplasm"/>
    <property type="evidence" value="ECO:0007669"/>
    <property type="project" value="UniProtKB-SubCell"/>
</dbReference>
<dbReference type="GO" id="GO:0004814">
    <property type="term" value="F:arginine-tRNA ligase activity"/>
    <property type="evidence" value="ECO:0007669"/>
    <property type="project" value="UniProtKB-UniRule"/>
</dbReference>
<dbReference type="GO" id="GO:0005524">
    <property type="term" value="F:ATP binding"/>
    <property type="evidence" value="ECO:0007669"/>
    <property type="project" value="UniProtKB-UniRule"/>
</dbReference>
<dbReference type="GO" id="GO:0006420">
    <property type="term" value="P:arginyl-tRNA aminoacylation"/>
    <property type="evidence" value="ECO:0007669"/>
    <property type="project" value="UniProtKB-UniRule"/>
</dbReference>
<dbReference type="CDD" id="cd07956">
    <property type="entry name" value="Anticodon_Ia_Arg"/>
    <property type="match status" value="1"/>
</dbReference>
<dbReference type="CDD" id="cd00671">
    <property type="entry name" value="ArgRS_core"/>
    <property type="match status" value="1"/>
</dbReference>
<dbReference type="FunFam" id="1.10.730.10:FF:000001">
    <property type="entry name" value="Arginine--tRNA ligase"/>
    <property type="match status" value="1"/>
</dbReference>
<dbReference type="FunFam" id="3.30.1360.70:FF:000001">
    <property type="entry name" value="Arginine--tRNA ligase"/>
    <property type="match status" value="1"/>
</dbReference>
<dbReference type="FunFam" id="3.40.50.620:FF:000030">
    <property type="entry name" value="Arginine--tRNA ligase"/>
    <property type="match status" value="1"/>
</dbReference>
<dbReference type="Gene3D" id="3.30.1360.70">
    <property type="entry name" value="Arginyl tRNA synthetase N-terminal domain"/>
    <property type="match status" value="1"/>
</dbReference>
<dbReference type="Gene3D" id="3.40.50.620">
    <property type="entry name" value="HUPs"/>
    <property type="match status" value="1"/>
</dbReference>
<dbReference type="Gene3D" id="1.10.730.10">
    <property type="entry name" value="Isoleucyl-tRNA Synthetase, Domain 1"/>
    <property type="match status" value="1"/>
</dbReference>
<dbReference type="HAMAP" id="MF_00123">
    <property type="entry name" value="Arg_tRNA_synth"/>
    <property type="match status" value="1"/>
</dbReference>
<dbReference type="InterPro" id="IPR001412">
    <property type="entry name" value="aa-tRNA-synth_I_CS"/>
</dbReference>
<dbReference type="InterPro" id="IPR001278">
    <property type="entry name" value="Arg-tRNA-ligase"/>
</dbReference>
<dbReference type="InterPro" id="IPR005148">
    <property type="entry name" value="Arg-tRNA-synth_N"/>
</dbReference>
<dbReference type="InterPro" id="IPR036695">
    <property type="entry name" value="Arg-tRNA-synth_N_sf"/>
</dbReference>
<dbReference type="InterPro" id="IPR035684">
    <property type="entry name" value="ArgRS_core"/>
</dbReference>
<dbReference type="InterPro" id="IPR008909">
    <property type="entry name" value="DALR_anticod-bd"/>
</dbReference>
<dbReference type="InterPro" id="IPR014729">
    <property type="entry name" value="Rossmann-like_a/b/a_fold"/>
</dbReference>
<dbReference type="InterPro" id="IPR009080">
    <property type="entry name" value="tRNAsynth_Ia_anticodon-bd"/>
</dbReference>
<dbReference type="NCBIfam" id="TIGR00456">
    <property type="entry name" value="argS"/>
    <property type="match status" value="1"/>
</dbReference>
<dbReference type="PANTHER" id="PTHR11956:SF5">
    <property type="entry name" value="ARGININE--TRNA LIGASE, CYTOPLASMIC"/>
    <property type="match status" value="1"/>
</dbReference>
<dbReference type="PANTHER" id="PTHR11956">
    <property type="entry name" value="ARGINYL-TRNA SYNTHETASE"/>
    <property type="match status" value="1"/>
</dbReference>
<dbReference type="Pfam" id="PF03485">
    <property type="entry name" value="Arg_tRNA_synt_N"/>
    <property type="match status" value="1"/>
</dbReference>
<dbReference type="Pfam" id="PF05746">
    <property type="entry name" value="DALR_1"/>
    <property type="match status" value="1"/>
</dbReference>
<dbReference type="Pfam" id="PF00750">
    <property type="entry name" value="tRNA-synt_1d"/>
    <property type="match status" value="1"/>
</dbReference>
<dbReference type="PRINTS" id="PR01038">
    <property type="entry name" value="TRNASYNTHARG"/>
</dbReference>
<dbReference type="SMART" id="SM01016">
    <property type="entry name" value="Arg_tRNA_synt_N"/>
    <property type="match status" value="1"/>
</dbReference>
<dbReference type="SMART" id="SM00836">
    <property type="entry name" value="DALR_1"/>
    <property type="match status" value="1"/>
</dbReference>
<dbReference type="SUPFAM" id="SSF47323">
    <property type="entry name" value="Anticodon-binding domain of a subclass of class I aminoacyl-tRNA synthetases"/>
    <property type="match status" value="1"/>
</dbReference>
<dbReference type="SUPFAM" id="SSF55190">
    <property type="entry name" value="Arginyl-tRNA synthetase (ArgRS), N-terminal 'additional' domain"/>
    <property type="match status" value="1"/>
</dbReference>
<dbReference type="SUPFAM" id="SSF52374">
    <property type="entry name" value="Nucleotidylyl transferase"/>
    <property type="match status" value="1"/>
</dbReference>
<dbReference type="PROSITE" id="PS00178">
    <property type="entry name" value="AA_TRNA_LIGASE_I"/>
    <property type="match status" value="1"/>
</dbReference>
<comment type="catalytic activity">
    <reaction evidence="1">
        <text>tRNA(Arg) + L-arginine + ATP = L-arginyl-tRNA(Arg) + AMP + diphosphate</text>
        <dbReference type="Rhea" id="RHEA:20301"/>
        <dbReference type="Rhea" id="RHEA-COMP:9658"/>
        <dbReference type="Rhea" id="RHEA-COMP:9673"/>
        <dbReference type="ChEBI" id="CHEBI:30616"/>
        <dbReference type="ChEBI" id="CHEBI:32682"/>
        <dbReference type="ChEBI" id="CHEBI:33019"/>
        <dbReference type="ChEBI" id="CHEBI:78442"/>
        <dbReference type="ChEBI" id="CHEBI:78513"/>
        <dbReference type="ChEBI" id="CHEBI:456215"/>
        <dbReference type="EC" id="6.1.1.19"/>
    </reaction>
</comment>
<comment type="subunit">
    <text evidence="1">Monomer.</text>
</comment>
<comment type="subcellular location">
    <subcellularLocation>
        <location evidence="1">Cytoplasm</location>
    </subcellularLocation>
</comment>
<comment type="similarity">
    <text evidence="1">Belongs to the class-I aminoacyl-tRNA synthetase family.</text>
</comment>
<accession>A6TB43</accession>
<evidence type="ECO:0000255" key="1">
    <source>
        <dbReference type="HAMAP-Rule" id="MF_00123"/>
    </source>
</evidence>
<evidence type="ECO:0007829" key="2">
    <source>
        <dbReference type="PDB" id="3GDZ"/>
    </source>
</evidence>
<sequence>MNIQALLSEKVSQALIAAGAPADCEPQVRQSAKVQFGDYQANGVMAVAKKLGMAPRQLAEQVLSHLDLNGIANKVEIAGPGFINIFLDPAFLADNVNRALQSERLGVTKPQAQTIVVDYSAPNVAKEMHVGHLRSTIIGDASVRTLEFLGHKVIRANHVGDWGTQFGMLIAYLEKQQQENAGEMALADLEGFYREAKKHYDEDEAFAERARSYVVKLQGGDEYFLQMWRKLVDITMSQNQITYDRLNVTLTRDDVMGESLYNPMLPGIVADLKAKGLAVESEGATVVFLDEYKNKEGEPMGVIIQKKDGGYLYTTTDIACAKYRYETLHADRVLYYIDSRQHQHLMQAWTIVRKAGYVPDSVPLEHHMFGMMLGKDGKPFKTRAGGTVKLADLLDEALERARRLVAEKNPDMSADELENLAKVVGIGAVKYADLSKNRTTDYVFDWDNMLAFEGNTAPYMQYAYTRVLSVFRKAGIDENAMIDAPVVIAEDREAQLAARLLQFEETLSVVAREGTPHVMCAYLYDLAGLFSGFYEHCPILSAESEETRNSRLKLALLTAKTLKLGLDTLGIETVERM</sequence>
<reference key="1">
    <citation type="submission" date="2006-09" db="EMBL/GenBank/DDBJ databases">
        <authorList>
            <consortium name="The Klebsiella pneumonia Genome Sequencing Project"/>
            <person name="McClelland M."/>
            <person name="Sanderson E.K."/>
            <person name="Spieth J."/>
            <person name="Clifton W.S."/>
            <person name="Latreille P."/>
            <person name="Sabo A."/>
            <person name="Pepin K."/>
            <person name="Bhonagiri V."/>
            <person name="Porwollik S."/>
            <person name="Ali J."/>
            <person name="Wilson R.K."/>
        </authorList>
    </citation>
    <scope>NUCLEOTIDE SEQUENCE [LARGE SCALE GENOMIC DNA]</scope>
    <source>
        <strain>ATCC 700721 / MGH 78578</strain>
    </source>
</reference>
<feature type="chain" id="PRO_1000018046" description="Arginine--tRNA ligase">
    <location>
        <begin position="1"/>
        <end position="577"/>
    </location>
</feature>
<feature type="short sequence motif" description="'HIGH' region">
    <location>
        <begin position="122"/>
        <end position="132"/>
    </location>
</feature>
<feature type="helix" evidence="2">
    <location>
        <begin position="3"/>
        <end position="17"/>
    </location>
</feature>
<feature type="strand" evidence="2">
    <location>
        <begin position="28"/>
        <end position="30"/>
    </location>
</feature>
<feature type="helix" evidence="2">
    <location>
        <begin position="34"/>
        <end position="36"/>
    </location>
</feature>
<feature type="strand" evidence="2">
    <location>
        <begin position="38"/>
        <end position="41"/>
    </location>
</feature>
<feature type="helix" evidence="2">
    <location>
        <begin position="44"/>
        <end position="50"/>
    </location>
</feature>
<feature type="helix" evidence="2">
    <location>
        <begin position="55"/>
        <end position="65"/>
    </location>
</feature>
<feature type="turn" evidence="2">
    <location>
        <begin position="69"/>
        <end position="71"/>
    </location>
</feature>
<feature type="strand" evidence="2">
    <location>
        <begin position="72"/>
        <end position="78"/>
    </location>
</feature>
<feature type="turn" evidence="2">
    <location>
        <begin position="79"/>
        <end position="81"/>
    </location>
</feature>
<feature type="strand" evidence="2">
    <location>
        <begin position="82"/>
        <end position="87"/>
    </location>
</feature>
<feature type="helix" evidence="2">
    <location>
        <begin position="89"/>
        <end position="100"/>
    </location>
</feature>
<name>SYR_KLEP7</name>
<proteinExistence type="evidence at protein level"/>
<gene>
    <name evidence="1" type="primary">argS</name>
    <name type="ordered locus">KPN78578_23530</name>
    <name type="ORF">KPN_02388</name>
</gene>
<protein>
    <recommendedName>
        <fullName evidence="1">Arginine--tRNA ligase</fullName>
        <ecNumber evidence="1">6.1.1.19</ecNumber>
    </recommendedName>
    <alternativeName>
        <fullName evidence="1">Arginyl-tRNA synthetase</fullName>
        <shortName evidence="1">ArgRS</shortName>
    </alternativeName>
</protein>
<organism>
    <name type="scientific">Klebsiella pneumoniae subsp. pneumoniae (strain ATCC 700721 / MGH 78578)</name>
    <dbReference type="NCBI Taxonomy" id="272620"/>
    <lineage>
        <taxon>Bacteria</taxon>
        <taxon>Pseudomonadati</taxon>
        <taxon>Pseudomonadota</taxon>
        <taxon>Gammaproteobacteria</taxon>
        <taxon>Enterobacterales</taxon>
        <taxon>Enterobacteriaceae</taxon>
        <taxon>Klebsiella/Raoultella group</taxon>
        <taxon>Klebsiella</taxon>
        <taxon>Klebsiella pneumoniae complex</taxon>
    </lineage>
</organism>